<organism>
    <name type="scientific">Caenorhabditis elegans</name>
    <dbReference type="NCBI Taxonomy" id="6239"/>
    <lineage>
        <taxon>Eukaryota</taxon>
        <taxon>Metazoa</taxon>
        <taxon>Ecdysozoa</taxon>
        <taxon>Nematoda</taxon>
        <taxon>Chromadorea</taxon>
        <taxon>Rhabditida</taxon>
        <taxon>Rhabditina</taxon>
        <taxon>Rhabditomorpha</taxon>
        <taxon>Rhabditoidea</taxon>
        <taxon>Rhabditidae</taxon>
        <taxon>Peloderinae</taxon>
        <taxon>Caenorhabditis</taxon>
    </lineage>
</organism>
<sequence>MIKFNSTNKTYWLPIYIMNDTSFQSGMYLYLLLTEILLYVGTGVIICKTVRTFLKIRLFHRNMNIMTALFLCQWFEAIAAKLLIIPYQIGVIRFSDYNKPYVSWWTDNEQEIIVLPEPTANSNALVISGFLIWHYAYTMIFGILNLGIERIFATVMLKDYENKPRLYIPVFLITSTHLITLTFSYFVLTNRTGFYLGTSPCFLNSALVVMTFLAVWKVNKHRHEKLEGSGPGCDYTLSQQFQVRENYRALKLAKNLVIVVLCAISVPCALLICLVIGAIPSFRMIFIHIMENFIYLNPVIICSTLMFSAPAWRAEYLKLIPGYKKIKSTRVFVVRPKPQTTHRASSTVVHDEGQMYFEQLNNSWK</sequence>
<comment type="subcellular location">
    <subcellularLocation>
        <location evidence="2">Membrane</location>
        <topology evidence="2">Multi-pass membrane protein</topology>
    </subcellularLocation>
</comment>
<comment type="similarity">
    <text evidence="2">Belongs to the nematode receptor-like protein sre family.</text>
</comment>
<name>SRE38_CAEEL</name>
<accession>O17816</accession>
<protein>
    <recommendedName>
        <fullName>Serpentine receptor class epsilon-38</fullName>
        <shortName>Protein sre-38</shortName>
    </recommendedName>
</protein>
<reference key="1">
    <citation type="journal article" date="1998" name="Science">
        <title>Genome sequence of the nematode C. elegans: a platform for investigating biology.</title>
        <authorList>
            <consortium name="The C. elegans sequencing consortium"/>
        </authorList>
    </citation>
    <scope>NUCLEOTIDE SEQUENCE [LARGE SCALE GENOMIC DNA]</scope>
    <source>
        <strain>Bristol N2</strain>
    </source>
</reference>
<proteinExistence type="inferred from homology"/>
<dbReference type="EMBL" id="Z81062">
    <property type="protein sequence ID" value="CAB02945.2"/>
    <property type="molecule type" value="Genomic_DNA"/>
</dbReference>
<dbReference type="PIR" id="H88337">
    <property type="entry name" value="H88337"/>
</dbReference>
<dbReference type="PIR" id="T20958">
    <property type="entry name" value="T20958"/>
</dbReference>
<dbReference type="RefSeq" id="NP_496651.1">
    <property type="nucleotide sequence ID" value="NM_064250.2"/>
</dbReference>
<dbReference type="SMR" id="O17816"/>
<dbReference type="FunCoup" id="O17816">
    <property type="interactions" value="18"/>
</dbReference>
<dbReference type="PaxDb" id="6239-F15A4.1"/>
<dbReference type="EnsemblMetazoa" id="F15A4.1.1">
    <property type="protein sequence ID" value="F15A4.1.1"/>
    <property type="gene ID" value="WBGene00008837"/>
</dbReference>
<dbReference type="GeneID" id="184510"/>
<dbReference type="KEGG" id="cel:CELE_F15A4.1"/>
<dbReference type="UCSC" id="F15A4.1">
    <property type="organism name" value="c. elegans"/>
</dbReference>
<dbReference type="AGR" id="WB:WBGene00008837"/>
<dbReference type="CTD" id="184510"/>
<dbReference type="WormBase" id="F15A4.1">
    <property type="protein sequence ID" value="CE23654"/>
    <property type="gene ID" value="WBGene00008837"/>
    <property type="gene designation" value="sre-38"/>
</dbReference>
<dbReference type="eggNOG" id="ENOG502TKFK">
    <property type="taxonomic scope" value="Eukaryota"/>
</dbReference>
<dbReference type="GeneTree" id="ENSGT01060000248764"/>
<dbReference type="HOGENOM" id="CLU_063305_1_0_1"/>
<dbReference type="InParanoid" id="O17816"/>
<dbReference type="OMA" id="WLPIYIM"/>
<dbReference type="OrthoDB" id="5839567at2759"/>
<dbReference type="PhylomeDB" id="O17816"/>
<dbReference type="PRO" id="PR:O17816"/>
<dbReference type="Proteomes" id="UP000001940">
    <property type="component" value="Chromosome II"/>
</dbReference>
<dbReference type="GO" id="GO:0016020">
    <property type="term" value="C:membrane"/>
    <property type="evidence" value="ECO:0007669"/>
    <property type="project" value="UniProtKB-SubCell"/>
</dbReference>
<dbReference type="GO" id="GO:0007606">
    <property type="term" value="P:sensory perception of chemical stimulus"/>
    <property type="evidence" value="ECO:0007669"/>
    <property type="project" value="InterPro"/>
</dbReference>
<dbReference type="InterPro" id="IPR004151">
    <property type="entry name" value="7TM_GPCR_serpentine_rcpt_Sre"/>
</dbReference>
<dbReference type="InterPro" id="IPR053365">
    <property type="entry name" value="Nematode_rcpt-like"/>
</dbReference>
<dbReference type="PANTHER" id="PTHR47757:SF1">
    <property type="entry name" value="SERPENTINE RECEPTOR, CLASS E (EPSILON)"/>
    <property type="match status" value="1"/>
</dbReference>
<dbReference type="PANTHER" id="PTHR47757">
    <property type="entry name" value="SERPENTINE RECEPTOR, CLASS E (EPSILON)-RELATED"/>
    <property type="match status" value="1"/>
</dbReference>
<dbReference type="Pfam" id="PF03125">
    <property type="entry name" value="Sre"/>
    <property type="match status" value="1"/>
</dbReference>
<feature type="chain" id="PRO_0000104549" description="Serpentine receptor class epsilon-38">
    <location>
        <begin position="1"/>
        <end position="365"/>
    </location>
</feature>
<feature type="transmembrane region" description="Helical" evidence="1">
    <location>
        <begin position="26"/>
        <end position="46"/>
    </location>
</feature>
<feature type="transmembrane region" description="Helical" evidence="1">
    <location>
        <begin position="65"/>
        <end position="85"/>
    </location>
</feature>
<feature type="transmembrane region" description="Helical" evidence="1">
    <location>
        <begin position="124"/>
        <end position="144"/>
    </location>
</feature>
<feature type="transmembrane region" description="Helical" evidence="1">
    <location>
        <begin position="168"/>
        <end position="188"/>
    </location>
</feature>
<feature type="transmembrane region" description="Helical" evidence="1">
    <location>
        <begin position="196"/>
        <end position="216"/>
    </location>
</feature>
<feature type="transmembrane region" description="Helical" evidence="1">
    <location>
        <begin position="256"/>
        <end position="276"/>
    </location>
</feature>
<feature type="transmembrane region" description="Helical" evidence="1">
    <location>
        <begin position="285"/>
        <end position="305"/>
    </location>
</feature>
<evidence type="ECO:0000255" key="1"/>
<evidence type="ECO:0000305" key="2"/>
<keyword id="KW-0472">Membrane</keyword>
<keyword id="KW-1185">Reference proteome</keyword>
<keyword id="KW-0812">Transmembrane</keyword>
<keyword id="KW-1133">Transmembrane helix</keyword>
<gene>
    <name type="primary">sre-38</name>
    <name type="ORF">F15A4.1</name>
</gene>